<gene>
    <name evidence="1" type="primary">argS</name>
    <name type="ordered locus">Cpar_2046</name>
</gene>
<dbReference type="EC" id="6.1.1.19" evidence="1"/>
<dbReference type="EMBL" id="CP001099">
    <property type="protein sequence ID" value="ACF12433.1"/>
    <property type="molecule type" value="Genomic_DNA"/>
</dbReference>
<dbReference type="RefSeq" id="WP_012503266.1">
    <property type="nucleotide sequence ID" value="NC_011027.1"/>
</dbReference>
<dbReference type="SMR" id="B3QLU7"/>
<dbReference type="STRING" id="517417.Cpar_2046"/>
<dbReference type="KEGG" id="cpc:Cpar_2046"/>
<dbReference type="eggNOG" id="COG0018">
    <property type="taxonomic scope" value="Bacteria"/>
</dbReference>
<dbReference type="HOGENOM" id="CLU_006406_0_1_10"/>
<dbReference type="OrthoDB" id="9805987at2"/>
<dbReference type="Proteomes" id="UP000008811">
    <property type="component" value="Chromosome"/>
</dbReference>
<dbReference type="GO" id="GO:0005737">
    <property type="term" value="C:cytoplasm"/>
    <property type="evidence" value="ECO:0007669"/>
    <property type="project" value="UniProtKB-SubCell"/>
</dbReference>
<dbReference type="GO" id="GO:0004814">
    <property type="term" value="F:arginine-tRNA ligase activity"/>
    <property type="evidence" value="ECO:0007669"/>
    <property type="project" value="UniProtKB-UniRule"/>
</dbReference>
<dbReference type="GO" id="GO:0005524">
    <property type="term" value="F:ATP binding"/>
    <property type="evidence" value="ECO:0007669"/>
    <property type="project" value="UniProtKB-UniRule"/>
</dbReference>
<dbReference type="GO" id="GO:0006420">
    <property type="term" value="P:arginyl-tRNA aminoacylation"/>
    <property type="evidence" value="ECO:0007669"/>
    <property type="project" value="UniProtKB-UniRule"/>
</dbReference>
<dbReference type="CDD" id="cd00671">
    <property type="entry name" value="ArgRS_core"/>
    <property type="match status" value="1"/>
</dbReference>
<dbReference type="FunFam" id="1.10.730.10:FF:000008">
    <property type="entry name" value="Arginine--tRNA ligase"/>
    <property type="match status" value="1"/>
</dbReference>
<dbReference type="Gene3D" id="3.30.1360.70">
    <property type="entry name" value="Arginyl tRNA synthetase N-terminal domain"/>
    <property type="match status" value="1"/>
</dbReference>
<dbReference type="Gene3D" id="3.40.50.620">
    <property type="entry name" value="HUPs"/>
    <property type="match status" value="1"/>
</dbReference>
<dbReference type="Gene3D" id="1.10.730.10">
    <property type="entry name" value="Isoleucyl-tRNA Synthetase, Domain 1"/>
    <property type="match status" value="1"/>
</dbReference>
<dbReference type="HAMAP" id="MF_00123">
    <property type="entry name" value="Arg_tRNA_synth"/>
    <property type="match status" value="1"/>
</dbReference>
<dbReference type="InterPro" id="IPR001278">
    <property type="entry name" value="Arg-tRNA-ligase"/>
</dbReference>
<dbReference type="InterPro" id="IPR005148">
    <property type="entry name" value="Arg-tRNA-synth_N"/>
</dbReference>
<dbReference type="InterPro" id="IPR036695">
    <property type="entry name" value="Arg-tRNA-synth_N_sf"/>
</dbReference>
<dbReference type="InterPro" id="IPR035684">
    <property type="entry name" value="ArgRS_core"/>
</dbReference>
<dbReference type="InterPro" id="IPR008909">
    <property type="entry name" value="DALR_anticod-bd"/>
</dbReference>
<dbReference type="InterPro" id="IPR014729">
    <property type="entry name" value="Rossmann-like_a/b/a_fold"/>
</dbReference>
<dbReference type="InterPro" id="IPR009080">
    <property type="entry name" value="tRNAsynth_Ia_anticodon-bd"/>
</dbReference>
<dbReference type="NCBIfam" id="TIGR00456">
    <property type="entry name" value="argS"/>
    <property type="match status" value="1"/>
</dbReference>
<dbReference type="PANTHER" id="PTHR11956:SF5">
    <property type="entry name" value="ARGININE--TRNA LIGASE, CYTOPLASMIC"/>
    <property type="match status" value="1"/>
</dbReference>
<dbReference type="PANTHER" id="PTHR11956">
    <property type="entry name" value="ARGINYL-TRNA SYNTHETASE"/>
    <property type="match status" value="1"/>
</dbReference>
<dbReference type="Pfam" id="PF03485">
    <property type="entry name" value="Arg_tRNA_synt_N"/>
    <property type="match status" value="1"/>
</dbReference>
<dbReference type="Pfam" id="PF05746">
    <property type="entry name" value="DALR_1"/>
    <property type="match status" value="1"/>
</dbReference>
<dbReference type="Pfam" id="PF00750">
    <property type="entry name" value="tRNA-synt_1d"/>
    <property type="match status" value="1"/>
</dbReference>
<dbReference type="PRINTS" id="PR01038">
    <property type="entry name" value="TRNASYNTHARG"/>
</dbReference>
<dbReference type="SMART" id="SM01016">
    <property type="entry name" value="Arg_tRNA_synt_N"/>
    <property type="match status" value="1"/>
</dbReference>
<dbReference type="SMART" id="SM00836">
    <property type="entry name" value="DALR_1"/>
    <property type="match status" value="1"/>
</dbReference>
<dbReference type="SUPFAM" id="SSF47323">
    <property type="entry name" value="Anticodon-binding domain of a subclass of class I aminoacyl-tRNA synthetases"/>
    <property type="match status" value="1"/>
</dbReference>
<dbReference type="SUPFAM" id="SSF55190">
    <property type="entry name" value="Arginyl-tRNA synthetase (ArgRS), N-terminal 'additional' domain"/>
    <property type="match status" value="1"/>
</dbReference>
<dbReference type="SUPFAM" id="SSF52374">
    <property type="entry name" value="Nucleotidylyl transferase"/>
    <property type="match status" value="1"/>
</dbReference>
<keyword id="KW-0030">Aminoacyl-tRNA synthetase</keyword>
<keyword id="KW-0067">ATP-binding</keyword>
<keyword id="KW-0963">Cytoplasm</keyword>
<keyword id="KW-0436">Ligase</keyword>
<keyword id="KW-0547">Nucleotide-binding</keyword>
<keyword id="KW-0648">Protein biosynthesis</keyword>
<name>SYR_CHLP8</name>
<protein>
    <recommendedName>
        <fullName evidence="1">Arginine--tRNA ligase</fullName>
        <ecNumber evidence="1">6.1.1.19</ecNumber>
    </recommendedName>
    <alternativeName>
        <fullName evidence="1">Arginyl-tRNA synthetase</fullName>
        <shortName evidence="1">ArgRS</shortName>
    </alternativeName>
</protein>
<proteinExistence type="inferred from homology"/>
<accession>B3QLU7</accession>
<feature type="chain" id="PRO_1000095349" description="Arginine--tRNA ligase">
    <location>
        <begin position="1"/>
        <end position="551"/>
    </location>
</feature>
<feature type="short sequence motif" description="'HIGH' region">
    <location>
        <begin position="123"/>
        <end position="133"/>
    </location>
</feature>
<evidence type="ECO:0000255" key="1">
    <source>
        <dbReference type="HAMAP-Rule" id="MF_00123"/>
    </source>
</evidence>
<comment type="catalytic activity">
    <reaction evidence="1">
        <text>tRNA(Arg) + L-arginine + ATP = L-arginyl-tRNA(Arg) + AMP + diphosphate</text>
        <dbReference type="Rhea" id="RHEA:20301"/>
        <dbReference type="Rhea" id="RHEA-COMP:9658"/>
        <dbReference type="Rhea" id="RHEA-COMP:9673"/>
        <dbReference type="ChEBI" id="CHEBI:30616"/>
        <dbReference type="ChEBI" id="CHEBI:32682"/>
        <dbReference type="ChEBI" id="CHEBI:33019"/>
        <dbReference type="ChEBI" id="CHEBI:78442"/>
        <dbReference type="ChEBI" id="CHEBI:78513"/>
        <dbReference type="ChEBI" id="CHEBI:456215"/>
        <dbReference type="EC" id="6.1.1.19"/>
    </reaction>
</comment>
<comment type="subunit">
    <text evidence="1">Monomer.</text>
</comment>
<comment type="subcellular location">
    <subcellularLocation>
        <location evidence="1">Cytoplasm</location>
    </subcellularLocation>
</comment>
<comment type="similarity">
    <text evidence="1">Belongs to the class-I aminoacyl-tRNA synthetase family.</text>
</comment>
<sequence length="551" mass="61729">MRAFFLPFIQDALHKAGIETDKEIQIDKPNDKKFGDFSTNIAFLLAKEARKNPRELATQLIGLFAFPEGTVTKTEVAGPGFINFHLAPAFFMRSAQEVLTQGEKFGCTESGKGQKAIVEYVSANPTGPLTIGRGRGGVLGDCIANLLETQGYEVTREYYFNDAGRQMQILAESVRYRYLEKCGQTVEFPETHYQGDYIGEIAGTLFIEHSDELASSDELGIFKETAEAVIFSSIRRTLERIGITHDSFFNEHTLYQWNEGEASGNQKVIDALEAKDFIGRYDGATWFMTTKLGQEKDKVLIKSSGDPSYRLPDIAYHVTKFERGFDLMVNVFGADHIDEYPDVLEALKILGYDASKVKIAINQFVTTTVGGQTVKMSTRKGNADLLDDLIEDVGADATRLFFIMRSKDSHLNFDVELAKKQSKDNPVFYLQYAHARICSLVRLAEKEVGFDEAAATGASLPLLDSEPEIDLASALLDFPDVIQSCLRLLEPQKMVEYLHTVAERYHKFYQECPILKADENIRTARLELSLTVRQVLRNGFRILGISAPESM</sequence>
<reference key="1">
    <citation type="submission" date="2008-06" db="EMBL/GenBank/DDBJ databases">
        <title>Complete sequence of Chlorobaculum parvum NCIB 8327.</title>
        <authorList>
            <consortium name="US DOE Joint Genome Institute"/>
            <person name="Lucas S."/>
            <person name="Copeland A."/>
            <person name="Lapidus A."/>
            <person name="Glavina del Rio T."/>
            <person name="Dalin E."/>
            <person name="Tice H."/>
            <person name="Bruce D."/>
            <person name="Goodwin L."/>
            <person name="Pitluck S."/>
            <person name="Schmutz J."/>
            <person name="Larimer F."/>
            <person name="Land M."/>
            <person name="Hauser L."/>
            <person name="Kyrpides N."/>
            <person name="Mikhailova N."/>
            <person name="Zhao F."/>
            <person name="Li T."/>
            <person name="Liu Z."/>
            <person name="Overmann J."/>
            <person name="Bryant D.A."/>
            <person name="Richardson P."/>
        </authorList>
    </citation>
    <scope>NUCLEOTIDE SEQUENCE [LARGE SCALE GENOMIC DNA]</scope>
    <source>
        <strain>DSM 263 / NCIMB 8327</strain>
    </source>
</reference>
<organism>
    <name type="scientific">Chlorobaculum parvum (strain DSM 263 / NCIMB 8327)</name>
    <name type="common">Chlorobium vibrioforme subsp. thiosulfatophilum</name>
    <dbReference type="NCBI Taxonomy" id="517417"/>
    <lineage>
        <taxon>Bacteria</taxon>
        <taxon>Pseudomonadati</taxon>
        <taxon>Chlorobiota</taxon>
        <taxon>Chlorobiia</taxon>
        <taxon>Chlorobiales</taxon>
        <taxon>Chlorobiaceae</taxon>
        <taxon>Chlorobaculum</taxon>
    </lineage>
</organism>